<reference key="1">
    <citation type="journal article" date="2006" name="J. Bacteriol.">
        <title>Comparative genomic evidence for a close relationship between the dimorphic prosthecate bacteria Hyphomonas neptunium and Caulobacter crescentus.</title>
        <authorList>
            <person name="Badger J.H."/>
            <person name="Hoover T.R."/>
            <person name="Brun Y.V."/>
            <person name="Weiner R.M."/>
            <person name="Laub M.T."/>
            <person name="Alexandre G."/>
            <person name="Mrazek J."/>
            <person name="Ren Q."/>
            <person name="Paulsen I.T."/>
            <person name="Nelson K.E."/>
            <person name="Khouri H.M."/>
            <person name="Radune D."/>
            <person name="Sosa J."/>
            <person name="Dodson R.J."/>
            <person name="Sullivan S.A."/>
            <person name="Rosovitz M.J."/>
            <person name="Madupu R."/>
            <person name="Brinkac L.M."/>
            <person name="Durkin A.S."/>
            <person name="Daugherty S.C."/>
            <person name="Kothari S.P."/>
            <person name="Giglio M.G."/>
            <person name="Zhou L."/>
            <person name="Haft D.H."/>
            <person name="Selengut J.D."/>
            <person name="Davidsen T.M."/>
            <person name="Yang Q."/>
            <person name="Zafar N."/>
            <person name="Ward N.L."/>
        </authorList>
    </citation>
    <scope>NUCLEOTIDE SEQUENCE [LARGE SCALE GENOMIC DNA]</scope>
    <source>
        <strain>ATCC 15444</strain>
    </source>
</reference>
<keyword id="KW-0963">Cytoplasm</keyword>
<keyword id="KW-0238">DNA-binding</keyword>
<keyword id="KW-1185">Reference proteome</keyword>
<keyword id="KW-0677">Repeat</keyword>
<keyword id="KW-0804">Transcription</keyword>
<keyword id="KW-0805">Transcription regulation</keyword>
<protein>
    <recommendedName>
        <fullName>Transcriptional regulator MraZ</fullName>
    </recommendedName>
</protein>
<accession>Q0BXT3</accession>
<comment type="subunit">
    <text evidence="1">Forms oligomers.</text>
</comment>
<comment type="subcellular location">
    <subcellularLocation>
        <location evidence="1">Cytoplasm</location>
        <location evidence="1">Nucleoid</location>
    </subcellularLocation>
</comment>
<comment type="similarity">
    <text evidence="1">Belongs to the MraZ family.</text>
</comment>
<sequence>MFVSTYEGAIDAKGRVSIPAPFRAALGGSSRVFVWQAPDGSGALEGGGEELMELYRETLAELPLQSPIREAIVTCIIAASAELKIDDTGRVKLPEDLCEAGELSGKIKFSGQMDSFRIWNPERFSLHQMRMRSIVTAPETLDAFASAYNRVRQRRMAAGRGGEGS</sequence>
<dbReference type="EMBL" id="CP000158">
    <property type="protein sequence ID" value="ABI78746.1"/>
    <property type="molecule type" value="Genomic_DNA"/>
</dbReference>
<dbReference type="RefSeq" id="WP_011648007.1">
    <property type="nucleotide sequence ID" value="NC_008358.1"/>
</dbReference>
<dbReference type="SMR" id="Q0BXT3"/>
<dbReference type="STRING" id="228405.HNE_3033"/>
<dbReference type="KEGG" id="hne:HNE_3033"/>
<dbReference type="eggNOG" id="COG2001">
    <property type="taxonomic scope" value="Bacteria"/>
</dbReference>
<dbReference type="HOGENOM" id="CLU_107907_1_0_5"/>
<dbReference type="Proteomes" id="UP000001959">
    <property type="component" value="Chromosome"/>
</dbReference>
<dbReference type="GO" id="GO:0005737">
    <property type="term" value="C:cytoplasm"/>
    <property type="evidence" value="ECO:0007669"/>
    <property type="project" value="UniProtKB-UniRule"/>
</dbReference>
<dbReference type="GO" id="GO:0009295">
    <property type="term" value="C:nucleoid"/>
    <property type="evidence" value="ECO:0007669"/>
    <property type="project" value="UniProtKB-SubCell"/>
</dbReference>
<dbReference type="GO" id="GO:0003700">
    <property type="term" value="F:DNA-binding transcription factor activity"/>
    <property type="evidence" value="ECO:0007669"/>
    <property type="project" value="UniProtKB-UniRule"/>
</dbReference>
<dbReference type="GO" id="GO:0000976">
    <property type="term" value="F:transcription cis-regulatory region binding"/>
    <property type="evidence" value="ECO:0007669"/>
    <property type="project" value="TreeGrafter"/>
</dbReference>
<dbReference type="GO" id="GO:2000143">
    <property type="term" value="P:negative regulation of DNA-templated transcription initiation"/>
    <property type="evidence" value="ECO:0007669"/>
    <property type="project" value="TreeGrafter"/>
</dbReference>
<dbReference type="CDD" id="cd16321">
    <property type="entry name" value="MraZ_C"/>
    <property type="match status" value="1"/>
</dbReference>
<dbReference type="CDD" id="cd16320">
    <property type="entry name" value="MraZ_N"/>
    <property type="match status" value="1"/>
</dbReference>
<dbReference type="Gene3D" id="3.40.1550.20">
    <property type="entry name" value="Transcriptional regulator MraZ domain"/>
    <property type="match status" value="1"/>
</dbReference>
<dbReference type="HAMAP" id="MF_01008">
    <property type="entry name" value="MraZ"/>
    <property type="match status" value="1"/>
</dbReference>
<dbReference type="InterPro" id="IPR003444">
    <property type="entry name" value="MraZ"/>
</dbReference>
<dbReference type="InterPro" id="IPR035644">
    <property type="entry name" value="MraZ_C"/>
</dbReference>
<dbReference type="InterPro" id="IPR020603">
    <property type="entry name" value="MraZ_dom"/>
</dbReference>
<dbReference type="InterPro" id="IPR035642">
    <property type="entry name" value="MraZ_N"/>
</dbReference>
<dbReference type="InterPro" id="IPR038619">
    <property type="entry name" value="MraZ_sf"/>
</dbReference>
<dbReference type="InterPro" id="IPR007159">
    <property type="entry name" value="SpoVT-AbrB_dom"/>
</dbReference>
<dbReference type="InterPro" id="IPR037914">
    <property type="entry name" value="SpoVT-AbrB_sf"/>
</dbReference>
<dbReference type="PANTHER" id="PTHR34701">
    <property type="entry name" value="TRANSCRIPTIONAL REGULATOR MRAZ"/>
    <property type="match status" value="1"/>
</dbReference>
<dbReference type="PANTHER" id="PTHR34701:SF1">
    <property type="entry name" value="TRANSCRIPTIONAL REGULATOR MRAZ"/>
    <property type="match status" value="1"/>
</dbReference>
<dbReference type="Pfam" id="PF02381">
    <property type="entry name" value="MraZ"/>
    <property type="match status" value="2"/>
</dbReference>
<dbReference type="SUPFAM" id="SSF89447">
    <property type="entry name" value="AbrB/MazE/MraZ-like"/>
    <property type="match status" value="1"/>
</dbReference>
<dbReference type="PROSITE" id="PS51740">
    <property type="entry name" value="SPOVT_ABRB"/>
    <property type="match status" value="2"/>
</dbReference>
<feature type="chain" id="PRO_1000062883" description="Transcriptional regulator MraZ">
    <location>
        <begin position="1"/>
        <end position="165"/>
    </location>
</feature>
<feature type="domain" description="SpoVT-AbrB 1" evidence="2">
    <location>
        <begin position="5"/>
        <end position="51"/>
    </location>
</feature>
<feature type="domain" description="SpoVT-AbrB 2" evidence="2">
    <location>
        <begin position="80"/>
        <end position="123"/>
    </location>
</feature>
<proteinExistence type="inferred from homology"/>
<gene>
    <name evidence="1" type="primary">mraZ</name>
    <name type="ordered locus">HNE_3033</name>
</gene>
<name>MRAZ_HYPNA</name>
<organism>
    <name type="scientific">Hyphomonas neptunium (strain ATCC 15444)</name>
    <dbReference type="NCBI Taxonomy" id="228405"/>
    <lineage>
        <taxon>Bacteria</taxon>
        <taxon>Pseudomonadati</taxon>
        <taxon>Pseudomonadota</taxon>
        <taxon>Alphaproteobacteria</taxon>
        <taxon>Hyphomonadales</taxon>
        <taxon>Hyphomonadaceae</taxon>
        <taxon>Hyphomonas</taxon>
    </lineage>
</organism>
<evidence type="ECO:0000255" key="1">
    <source>
        <dbReference type="HAMAP-Rule" id="MF_01008"/>
    </source>
</evidence>
<evidence type="ECO:0000255" key="2">
    <source>
        <dbReference type="PROSITE-ProRule" id="PRU01076"/>
    </source>
</evidence>